<dbReference type="EMBL" id="AM167904">
    <property type="protein sequence ID" value="CAJ49679.1"/>
    <property type="molecule type" value="Genomic_DNA"/>
</dbReference>
<dbReference type="RefSeq" id="WP_005012868.1">
    <property type="nucleotide sequence ID" value="NC_010645.1"/>
</dbReference>
<dbReference type="SMR" id="Q2KZL7"/>
<dbReference type="STRING" id="360910.BAV2069"/>
<dbReference type="GeneID" id="93120585"/>
<dbReference type="KEGG" id="bav:BAV2069"/>
<dbReference type="eggNOG" id="COG0291">
    <property type="taxonomic scope" value="Bacteria"/>
</dbReference>
<dbReference type="HOGENOM" id="CLU_169643_1_0_4"/>
<dbReference type="OrthoDB" id="47476at2"/>
<dbReference type="Proteomes" id="UP000001977">
    <property type="component" value="Chromosome"/>
</dbReference>
<dbReference type="GO" id="GO:0022625">
    <property type="term" value="C:cytosolic large ribosomal subunit"/>
    <property type="evidence" value="ECO:0007669"/>
    <property type="project" value="TreeGrafter"/>
</dbReference>
<dbReference type="GO" id="GO:0003735">
    <property type="term" value="F:structural constituent of ribosome"/>
    <property type="evidence" value="ECO:0007669"/>
    <property type="project" value="InterPro"/>
</dbReference>
<dbReference type="GO" id="GO:0006412">
    <property type="term" value="P:translation"/>
    <property type="evidence" value="ECO:0007669"/>
    <property type="project" value="UniProtKB-UniRule"/>
</dbReference>
<dbReference type="FunFam" id="4.10.410.60:FF:000001">
    <property type="entry name" value="50S ribosomal protein L35"/>
    <property type="match status" value="1"/>
</dbReference>
<dbReference type="Gene3D" id="4.10.410.60">
    <property type="match status" value="1"/>
</dbReference>
<dbReference type="HAMAP" id="MF_00514">
    <property type="entry name" value="Ribosomal_bL35"/>
    <property type="match status" value="1"/>
</dbReference>
<dbReference type="InterPro" id="IPR001706">
    <property type="entry name" value="Ribosomal_bL35"/>
</dbReference>
<dbReference type="InterPro" id="IPR021137">
    <property type="entry name" value="Ribosomal_bL35-like"/>
</dbReference>
<dbReference type="InterPro" id="IPR018265">
    <property type="entry name" value="Ribosomal_bL35_CS"/>
</dbReference>
<dbReference type="InterPro" id="IPR037229">
    <property type="entry name" value="Ribosomal_bL35_sf"/>
</dbReference>
<dbReference type="NCBIfam" id="TIGR00001">
    <property type="entry name" value="rpmI_bact"/>
    <property type="match status" value="1"/>
</dbReference>
<dbReference type="PANTHER" id="PTHR33343">
    <property type="entry name" value="54S RIBOSOMAL PROTEIN BL35M"/>
    <property type="match status" value="1"/>
</dbReference>
<dbReference type="PANTHER" id="PTHR33343:SF1">
    <property type="entry name" value="LARGE RIBOSOMAL SUBUNIT PROTEIN BL35M"/>
    <property type="match status" value="1"/>
</dbReference>
<dbReference type="Pfam" id="PF01632">
    <property type="entry name" value="Ribosomal_L35p"/>
    <property type="match status" value="1"/>
</dbReference>
<dbReference type="PRINTS" id="PR00064">
    <property type="entry name" value="RIBOSOMALL35"/>
</dbReference>
<dbReference type="SUPFAM" id="SSF143034">
    <property type="entry name" value="L35p-like"/>
    <property type="match status" value="1"/>
</dbReference>
<dbReference type="PROSITE" id="PS00936">
    <property type="entry name" value="RIBOSOMAL_L35"/>
    <property type="match status" value="1"/>
</dbReference>
<reference key="1">
    <citation type="journal article" date="2006" name="J. Bacteriol.">
        <title>Comparison of the genome sequence of the poultry pathogen Bordetella avium with those of B. bronchiseptica, B. pertussis, and B. parapertussis reveals extensive diversity in surface structures associated with host interaction.</title>
        <authorList>
            <person name="Sebaihia M."/>
            <person name="Preston A."/>
            <person name="Maskell D.J."/>
            <person name="Kuzmiak H."/>
            <person name="Connell T.D."/>
            <person name="King N.D."/>
            <person name="Orndorff P.E."/>
            <person name="Miyamoto D.M."/>
            <person name="Thomson N.R."/>
            <person name="Harris D."/>
            <person name="Goble A."/>
            <person name="Lord A."/>
            <person name="Murphy L."/>
            <person name="Quail M.A."/>
            <person name="Rutter S."/>
            <person name="Squares R."/>
            <person name="Squares S."/>
            <person name="Woodward J."/>
            <person name="Parkhill J."/>
            <person name="Temple L.M."/>
        </authorList>
    </citation>
    <scope>NUCLEOTIDE SEQUENCE [LARGE SCALE GENOMIC DNA]</scope>
    <source>
        <strain>197N</strain>
    </source>
</reference>
<keyword id="KW-1185">Reference proteome</keyword>
<keyword id="KW-0687">Ribonucleoprotein</keyword>
<keyword id="KW-0689">Ribosomal protein</keyword>
<organism>
    <name type="scientific">Bordetella avium (strain 197N)</name>
    <dbReference type="NCBI Taxonomy" id="360910"/>
    <lineage>
        <taxon>Bacteria</taxon>
        <taxon>Pseudomonadati</taxon>
        <taxon>Pseudomonadota</taxon>
        <taxon>Betaproteobacteria</taxon>
        <taxon>Burkholderiales</taxon>
        <taxon>Alcaligenaceae</taxon>
        <taxon>Bordetella</taxon>
    </lineage>
</organism>
<proteinExistence type="inferred from homology"/>
<feature type="chain" id="PRO_0000258642" description="Large ribosomal subunit protein bL35">
    <location>
        <begin position="1"/>
        <end position="65"/>
    </location>
</feature>
<feature type="region of interest" description="Disordered" evidence="2">
    <location>
        <begin position="1"/>
        <end position="26"/>
    </location>
</feature>
<feature type="compositionally biased region" description="Basic residues" evidence="2">
    <location>
        <begin position="1"/>
        <end position="15"/>
    </location>
</feature>
<sequence>MPKMKTKKSAAKRFQVRGSGSIKRGQAFKRHILTKKTTKNKRQLRGSAAVHETNIASVKAMMPFA</sequence>
<evidence type="ECO:0000255" key="1">
    <source>
        <dbReference type="HAMAP-Rule" id="MF_00514"/>
    </source>
</evidence>
<evidence type="ECO:0000256" key="2">
    <source>
        <dbReference type="SAM" id="MobiDB-lite"/>
    </source>
</evidence>
<evidence type="ECO:0000305" key="3"/>
<comment type="similarity">
    <text evidence="1">Belongs to the bacterial ribosomal protein bL35 family.</text>
</comment>
<accession>Q2KZL7</accession>
<name>RL35_BORA1</name>
<protein>
    <recommendedName>
        <fullName evidence="1">Large ribosomal subunit protein bL35</fullName>
    </recommendedName>
    <alternativeName>
        <fullName evidence="3">50S ribosomal protein L35</fullName>
    </alternativeName>
</protein>
<gene>
    <name evidence="1" type="primary">rpmI</name>
    <name type="ordered locus">BAV2069</name>
</gene>